<feature type="chain" id="PRO_0000265861" description="ATP synthase epsilon chain">
    <location>
        <begin position="1"/>
        <end position="140"/>
    </location>
</feature>
<name>ATPE_PSET1</name>
<comment type="function">
    <text evidence="1">Produces ATP from ADP in the presence of a proton gradient across the membrane.</text>
</comment>
<comment type="subunit">
    <text>F-type ATPases have 2 components, CF(1) - the catalytic core - and CF(0) - the membrane proton channel. CF(1) has five subunits: alpha(3), beta(3), gamma(1), delta(1), epsilon(1). CF(0) has three main subunits: a, b and c.</text>
</comment>
<comment type="subcellular location">
    <subcellularLocation>
        <location evidence="1">Cell inner membrane</location>
        <topology evidence="1">Peripheral membrane protein</topology>
    </subcellularLocation>
</comment>
<comment type="similarity">
    <text evidence="1">Belongs to the ATPase epsilon chain family.</text>
</comment>
<dbReference type="EMBL" id="CR954246">
    <property type="protein sequence ID" value="CAI88036.1"/>
    <property type="molecule type" value="Genomic_DNA"/>
</dbReference>
<dbReference type="SMR" id="Q3IK29"/>
<dbReference type="STRING" id="326442.PSHAa3007"/>
<dbReference type="KEGG" id="pha:PSHAa3007"/>
<dbReference type="eggNOG" id="COG0355">
    <property type="taxonomic scope" value="Bacteria"/>
</dbReference>
<dbReference type="HOGENOM" id="CLU_084338_2_0_6"/>
<dbReference type="BioCyc" id="PHAL326442:PSHA_RS14755-MONOMER"/>
<dbReference type="Proteomes" id="UP000006843">
    <property type="component" value="Chromosome I"/>
</dbReference>
<dbReference type="GO" id="GO:0005886">
    <property type="term" value="C:plasma membrane"/>
    <property type="evidence" value="ECO:0007669"/>
    <property type="project" value="UniProtKB-SubCell"/>
</dbReference>
<dbReference type="GO" id="GO:0045259">
    <property type="term" value="C:proton-transporting ATP synthase complex"/>
    <property type="evidence" value="ECO:0007669"/>
    <property type="project" value="UniProtKB-KW"/>
</dbReference>
<dbReference type="GO" id="GO:0005524">
    <property type="term" value="F:ATP binding"/>
    <property type="evidence" value="ECO:0007669"/>
    <property type="project" value="UniProtKB-UniRule"/>
</dbReference>
<dbReference type="GO" id="GO:0046933">
    <property type="term" value="F:proton-transporting ATP synthase activity, rotational mechanism"/>
    <property type="evidence" value="ECO:0007669"/>
    <property type="project" value="UniProtKB-UniRule"/>
</dbReference>
<dbReference type="CDD" id="cd12152">
    <property type="entry name" value="F1-ATPase_delta"/>
    <property type="match status" value="1"/>
</dbReference>
<dbReference type="FunFam" id="2.60.15.10:FF:000001">
    <property type="entry name" value="ATP synthase epsilon chain"/>
    <property type="match status" value="1"/>
</dbReference>
<dbReference type="Gene3D" id="1.20.5.440">
    <property type="entry name" value="ATP synthase delta/epsilon subunit, C-terminal domain"/>
    <property type="match status" value="1"/>
</dbReference>
<dbReference type="Gene3D" id="2.60.15.10">
    <property type="entry name" value="F0F1 ATP synthase delta/epsilon subunit, N-terminal"/>
    <property type="match status" value="1"/>
</dbReference>
<dbReference type="HAMAP" id="MF_00530">
    <property type="entry name" value="ATP_synth_epsil_bac"/>
    <property type="match status" value="1"/>
</dbReference>
<dbReference type="InterPro" id="IPR036794">
    <property type="entry name" value="ATP_F1_dsu/esu_C_sf"/>
</dbReference>
<dbReference type="InterPro" id="IPR001469">
    <property type="entry name" value="ATP_synth_F1_dsu/esu"/>
</dbReference>
<dbReference type="InterPro" id="IPR020546">
    <property type="entry name" value="ATP_synth_F1_dsu/esu_N"/>
</dbReference>
<dbReference type="InterPro" id="IPR020547">
    <property type="entry name" value="ATP_synth_F1_esu_C"/>
</dbReference>
<dbReference type="InterPro" id="IPR036771">
    <property type="entry name" value="ATPsynth_dsu/esu_N"/>
</dbReference>
<dbReference type="NCBIfam" id="TIGR01216">
    <property type="entry name" value="ATP_synt_epsi"/>
    <property type="match status" value="1"/>
</dbReference>
<dbReference type="NCBIfam" id="NF001847">
    <property type="entry name" value="PRK00571.1-4"/>
    <property type="match status" value="1"/>
</dbReference>
<dbReference type="PANTHER" id="PTHR13822">
    <property type="entry name" value="ATP SYNTHASE DELTA/EPSILON CHAIN"/>
    <property type="match status" value="1"/>
</dbReference>
<dbReference type="PANTHER" id="PTHR13822:SF10">
    <property type="entry name" value="ATP SYNTHASE EPSILON CHAIN, CHLOROPLASTIC"/>
    <property type="match status" value="1"/>
</dbReference>
<dbReference type="Pfam" id="PF00401">
    <property type="entry name" value="ATP-synt_DE"/>
    <property type="match status" value="1"/>
</dbReference>
<dbReference type="Pfam" id="PF02823">
    <property type="entry name" value="ATP-synt_DE_N"/>
    <property type="match status" value="1"/>
</dbReference>
<dbReference type="SUPFAM" id="SSF46604">
    <property type="entry name" value="Epsilon subunit of F1F0-ATP synthase C-terminal domain"/>
    <property type="match status" value="1"/>
</dbReference>
<dbReference type="SUPFAM" id="SSF51344">
    <property type="entry name" value="Epsilon subunit of F1F0-ATP synthase N-terminal domain"/>
    <property type="match status" value="1"/>
</dbReference>
<proteinExistence type="inferred from homology"/>
<protein>
    <recommendedName>
        <fullName evidence="1">ATP synthase epsilon chain</fullName>
    </recommendedName>
    <alternativeName>
        <fullName evidence="1">ATP synthase F1 sector epsilon subunit</fullName>
    </alternativeName>
    <alternativeName>
        <fullName evidence="1">F-ATPase epsilon subunit</fullName>
    </alternativeName>
</protein>
<sequence>MAAMTVHLDVVSAEQSLFSGRVESIQVTGSEGELGVNAGHAPLLTALKPGMVRLVKQFGEEEFIYIAGGTLEVQPNLVTVLADTAVRGEDLDEQAAEAAKRDAEAQMAKGASAELDYNQAAVQLAEAIAQLRIIQQLRKK</sequence>
<accession>Q3IK29</accession>
<gene>
    <name evidence="1" type="primary">atpC</name>
    <name type="ordered locus">PSHAa3007</name>
</gene>
<organism>
    <name type="scientific">Pseudoalteromonas translucida (strain TAC 125)</name>
    <dbReference type="NCBI Taxonomy" id="326442"/>
    <lineage>
        <taxon>Bacteria</taxon>
        <taxon>Pseudomonadati</taxon>
        <taxon>Pseudomonadota</taxon>
        <taxon>Gammaproteobacteria</taxon>
        <taxon>Alteromonadales</taxon>
        <taxon>Pseudoalteromonadaceae</taxon>
        <taxon>Pseudoalteromonas</taxon>
    </lineage>
</organism>
<reference key="1">
    <citation type="journal article" date="2005" name="Genome Res.">
        <title>Coping with cold: the genome of the versatile marine Antarctica bacterium Pseudoalteromonas haloplanktis TAC125.</title>
        <authorList>
            <person name="Medigue C."/>
            <person name="Krin E."/>
            <person name="Pascal G."/>
            <person name="Barbe V."/>
            <person name="Bernsel A."/>
            <person name="Bertin P.N."/>
            <person name="Cheung F."/>
            <person name="Cruveiller S."/>
            <person name="D'Amico S."/>
            <person name="Duilio A."/>
            <person name="Fang G."/>
            <person name="Feller G."/>
            <person name="Ho C."/>
            <person name="Mangenot S."/>
            <person name="Marino G."/>
            <person name="Nilsson J."/>
            <person name="Parrilli E."/>
            <person name="Rocha E.P.C."/>
            <person name="Rouy Z."/>
            <person name="Sekowska A."/>
            <person name="Tutino M.L."/>
            <person name="Vallenet D."/>
            <person name="von Heijne G."/>
            <person name="Danchin A."/>
        </authorList>
    </citation>
    <scope>NUCLEOTIDE SEQUENCE [LARGE SCALE GENOMIC DNA]</scope>
    <source>
        <strain>TAC 125</strain>
    </source>
</reference>
<evidence type="ECO:0000255" key="1">
    <source>
        <dbReference type="HAMAP-Rule" id="MF_00530"/>
    </source>
</evidence>
<keyword id="KW-0066">ATP synthesis</keyword>
<keyword id="KW-0997">Cell inner membrane</keyword>
<keyword id="KW-1003">Cell membrane</keyword>
<keyword id="KW-0139">CF(1)</keyword>
<keyword id="KW-0375">Hydrogen ion transport</keyword>
<keyword id="KW-0406">Ion transport</keyword>
<keyword id="KW-0472">Membrane</keyword>
<keyword id="KW-1185">Reference proteome</keyword>
<keyword id="KW-0813">Transport</keyword>